<name>ZUPT_CHLPM</name>
<comment type="function">
    <text evidence="1">Mediates zinc uptake. May also transport other divalent cations.</text>
</comment>
<comment type="catalytic activity">
    <reaction evidence="1">
        <text>Zn(2+)(in) = Zn(2+)(out)</text>
        <dbReference type="Rhea" id="RHEA:29351"/>
        <dbReference type="ChEBI" id="CHEBI:29105"/>
    </reaction>
</comment>
<comment type="subcellular location">
    <subcellularLocation>
        <location evidence="1">Cell membrane</location>
        <topology evidence="1">Multi-pass membrane protein</topology>
    </subcellularLocation>
</comment>
<comment type="similarity">
    <text evidence="1">Belongs to the ZIP transporter (TC 2.A.5) family. ZupT subfamily.</text>
</comment>
<reference key="1">
    <citation type="submission" date="2007-03" db="EMBL/GenBank/DDBJ databases">
        <title>Complete sequence of Prosthecochloris vibrioformis DSM 265.</title>
        <authorList>
            <consortium name="US DOE Joint Genome Institute"/>
            <person name="Copeland A."/>
            <person name="Lucas S."/>
            <person name="Lapidus A."/>
            <person name="Barry K."/>
            <person name="Detter J.C."/>
            <person name="Glavina del Rio T."/>
            <person name="Hammon N."/>
            <person name="Israni S."/>
            <person name="Pitluck S."/>
            <person name="Schmutz J."/>
            <person name="Larimer F."/>
            <person name="Land M."/>
            <person name="Hauser L."/>
            <person name="Mikhailova N."/>
            <person name="Li T."/>
            <person name="Overmann J."/>
            <person name="Schuster S.C."/>
            <person name="Bryant D.A."/>
            <person name="Richardson P."/>
        </authorList>
    </citation>
    <scope>NUCLEOTIDE SEQUENCE [LARGE SCALE GENOMIC DNA]</scope>
    <source>
        <strain>DSM 265 / 1930</strain>
    </source>
</reference>
<accession>A4SE48</accession>
<feature type="chain" id="PRO_1000128959" description="Zinc transporter ZupT">
    <location>
        <begin position="1"/>
        <end position="266"/>
    </location>
</feature>
<feature type="transmembrane region" description="Helical" evidence="1">
    <location>
        <begin position="8"/>
        <end position="28"/>
    </location>
</feature>
<feature type="transmembrane region" description="Helical" evidence="1">
    <location>
        <begin position="35"/>
        <end position="55"/>
    </location>
</feature>
<feature type="transmembrane region" description="Helical" evidence="1">
    <location>
        <begin position="70"/>
        <end position="90"/>
    </location>
</feature>
<feature type="transmembrane region" description="Helical" evidence="1">
    <location>
        <begin position="123"/>
        <end position="143"/>
    </location>
</feature>
<feature type="transmembrane region" description="Helical" evidence="1">
    <location>
        <begin position="152"/>
        <end position="172"/>
    </location>
</feature>
<feature type="transmembrane region" description="Helical" evidence="1">
    <location>
        <begin position="185"/>
        <end position="205"/>
    </location>
</feature>
<feature type="transmembrane region" description="Helical" evidence="1">
    <location>
        <begin position="209"/>
        <end position="229"/>
    </location>
</feature>
<feature type="transmembrane region" description="Helical" evidence="1">
    <location>
        <begin position="246"/>
        <end position="266"/>
    </location>
</feature>
<feature type="binding site" description="M2 metal binding site" evidence="1">
    <location>
        <position position="134"/>
    </location>
    <ligand>
        <name>Fe(2+)</name>
        <dbReference type="ChEBI" id="CHEBI:29033"/>
    </ligand>
</feature>
<feature type="binding site" description="M2 metal binding site" evidence="1">
    <location>
        <position position="137"/>
    </location>
    <ligand>
        <name>Fe(2+)</name>
        <dbReference type="ChEBI" id="CHEBI:29033"/>
    </ligand>
</feature>
<feature type="binding site" description="M1 metal binding site" evidence="1">
    <location>
        <position position="137"/>
    </location>
    <ligand>
        <name>Zn(2+)</name>
        <dbReference type="ChEBI" id="CHEBI:29105"/>
    </ligand>
</feature>
<feature type="binding site" description="M1 metal binding site" evidence="1">
    <location>
        <position position="162"/>
    </location>
    <ligand>
        <name>Zn(2+)</name>
        <dbReference type="ChEBI" id="CHEBI:29105"/>
    </ligand>
</feature>
<feature type="binding site" description="M2 metal binding site" evidence="1">
    <location>
        <position position="163"/>
    </location>
    <ligand>
        <name>Fe(2+)</name>
        <dbReference type="ChEBI" id="CHEBI:29033"/>
    </ligand>
</feature>
<feature type="binding site" description="M2 metal binding site" evidence="1">
    <location>
        <position position="166"/>
    </location>
    <ligand>
        <name>Fe(2+)</name>
        <dbReference type="ChEBI" id="CHEBI:29033"/>
    </ligand>
</feature>
<feature type="binding site" description="M1 metal binding site" evidence="1">
    <location>
        <position position="166"/>
    </location>
    <ligand>
        <name>Zn(2+)</name>
        <dbReference type="ChEBI" id="CHEBI:29105"/>
    </ligand>
</feature>
<feature type="binding site" description="M2 metal binding site" evidence="1">
    <location>
        <position position="195"/>
    </location>
    <ligand>
        <name>Fe(2+)</name>
        <dbReference type="ChEBI" id="CHEBI:29033"/>
    </ligand>
</feature>
<proteinExistence type="inferred from homology"/>
<dbReference type="EMBL" id="CP000607">
    <property type="protein sequence ID" value="ABP36757.1"/>
    <property type="molecule type" value="Genomic_DNA"/>
</dbReference>
<dbReference type="SMR" id="A4SE48"/>
<dbReference type="STRING" id="290318.Cvib_0742"/>
<dbReference type="KEGG" id="pvi:Cvib_0742"/>
<dbReference type="eggNOG" id="COG0428">
    <property type="taxonomic scope" value="Bacteria"/>
</dbReference>
<dbReference type="HOGENOM" id="CLU_015114_1_3_10"/>
<dbReference type="OrthoDB" id="9787346at2"/>
<dbReference type="GO" id="GO:0005886">
    <property type="term" value="C:plasma membrane"/>
    <property type="evidence" value="ECO:0007669"/>
    <property type="project" value="UniProtKB-SubCell"/>
</dbReference>
<dbReference type="GO" id="GO:0046872">
    <property type="term" value="F:metal ion binding"/>
    <property type="evidence" value="ECO:0007669"/>
    <property type="project" value="UniProtKB-KW"/>
</dbReference>
<dbReference type="GO" id="GO:0005385">
    <property type="term" value="F:zinc ion transmembrane transporter activity"/>
    <property type="evidence" value="ECO:0007669"/>
    <property type="project" value="UniProtKB-UniRule"/>
</dbReference>
<dbReference type="HAMAP" id="MF_00548">
    <property type="entry name" value="ZupT"/>
    <property type="match status" value="1"/>
</dbReference>
<dbReference type="InterPro" id="IPR003689">
    <property type="entry name" value="ZIP"/>
</dbReference>
<dbReference type="InterPro" id="IPR023498">
    <property type="entry name" value="Zn_transptr_ZupT"/>
</dbReference>
<dbReference type="NCBIfam" id="NF003243">
    <property type="entry name" value="PRK04201.1"/>
    <property type="match status" value="1"/>
</dbReference>
<dbReference type="PANTHER" id="PTHR11040:SF205">
    <property type="entry name" value="ZINC TRANSPORTER ZUPT"/>
    <property type="match status" value="1"/>
</dbReference>
<dbReference type="PANTHER" id="PTHR11040">
    <property type="entry name" value="ZINC/IRON TRANSPORTER"/>
    <property type="match status" value="1"/>
</dbReference>
<dbReference type="Pfam" id="PF02535">
    <property type="entry name" value="Zip"/>
    <property type="match status" value="1"/>
</dbReference>
<keyword id="KW-1003">Cell membrane</keyword>
<keyword id="KW-0406">Ion transport</keyword>
<keyword id="KW-0408">Iron</keyword>
<keyword id="KW-0472">Membrane</keyword>
<keyword id="KW-0479">Metal-binding</keyword>
<keyword id="KW-0812">Transmembrane</keyword>
<keyword id="KW-1133">Transmembrane helix</keyword>
<keyword id="KW-0813">Transport</keyword>
<keyword id="KW-0862">Zinc</keyword>
<keyword id="KW-0864">Zinc transport</keyword>
<evidence type="ECO:0000255" key="1">
    <source>
        <dbReference type="HAMAP-Rule" id="MF_00548"/>
    </source>
</evidence>
<protein>
    <recommendedName>
        <fullName evidence="1">Zinc transporter ZupT</fullName>
    </recommendedName>
</protein>
<sequence>MNDLYPALLLTLLAGLSTGIGSAMALVVKHTNTRFLTLALGFSAGVMLYVSFVELLPQSEETLLAGMPSQAAAWVATLAFFGGIFFIWAIDQLVPDVENPHEMSYIGRMEERVPDSMRLNRMGLFTAAAIAIHNFPEGMAVFFSALSNQNLGIVIATTIALHNIPEGMAIAVPIYFATKSRKKAFTYSFLSGLAEPLGAIVGFAILKPWLSPPVFGSVLAAVAGIMVYISLDELLPTAEEYGEHHLAISGLIAGMAVMALSLLLLA</sequence>
<gene>
    <name evidence="1" type="primary">zupT</name>
    <name type="ordered locus">Cvib_0742</name>
</gene>
<organism>
    <name type="scientific">Chlorobium phaeovibrioides (strain DSM 265 / 1930)</name>
    <name type="common">Prosthecochloris vibrioformis (strain DSM 265)</name>
    <dbReference type="NCBI Taxonomy" id="290318"/>
    <lineage>
        <taxon>Bacteria</taxon>
        <taxon>Pseudomonadati</taxon>
        <taxon>Chlorobiota</taxon>
        <taxon>Chlorobiia</taxon>
        <taxon>Chlorobiales</taxon>
        <taxon>Chlorobiaceae</taxon>
        <taxon>Chlorobium/Pelodictyon group</taxon>
        <taxon>Chlorobium</taxon>
    </lineage>
</organism>